<protein>
    <recommendedName>
        <fullName evidence="1">dCTP deaminase</fullName>
        <ecNumber evidence="1">3.5.4.13</ecNumber>
    </recommendedName>
    <alternativeName>
        <fullName evidence="1">Deoxycytidine triphosphate deaminase</fullName>
    </alternativeName>
</protein>
<keyword id="KW-0378">Hydrolase</keyword>
<keyword id="KW-0546">Nucleotide metabolism</keyword>
<keyword id="KW-0547">Nucleotide-binding</keyword>
<gene>
    <name evidence="1" type="primary">dcd</name>
    <name type="ordered locus">Spro_1577</name>
</gene>
<feature type="chain" id="PRO_1000058104" description="dCTP deaminase">
    <location>
        <begin position="1"/>
        <end position="193"/>
    </location>
</feature>
<feature type="region of interest" description="Disordered" evidence="2">
    <location>
        <begin position="169"/>
        <end position="193"/>
    </location>
</feature>
<feature type="active site" description="Proton donor/acceptor" evidence="1">
    <location>
        <position position="138"/>
    </location>
</feature>
<feature type="binding site" evidence="1">
    <location>
        <begin position="110"/>
        <end position="115"/>
    </location>
    <ligand>
        <name>dCTP</name>
        <dbReference type="ChEBI" id="CHEBI:61481"/>
    </ligand>
</feature>
<feature type="binding site" evidence="1">
    <location>
        <position position="128"/>
    </location>
    <ligand>
        <name>dCTP</name>
        <dbReference type="ChEBI" id="CHEBI:61481"/>
    </ligand>
</feature>
<feature type="binding site" evidence="1">
    <location>
        <begin position="136"/>
        <end position="138"/>
    </location>
    <ligand>
        <name>dCTP</name>
        <dbReference type="ChEBI" id="CHEBI:61481"/>
    </ligand>
</feature>
<feature type="binding site" evidence="1">
    <location>
        <position position="171"/>
    </location>
    <ligand>
        <name>dCTP</name>
        <dbReference type="ChEBI" id="CHEBI:61481"/>
    </ligand>
</feature>
<feature type="binding site" evidence="1">
    <location>
        <position position="178"/>
    </location>
    <ligand>
        <name>dCTP</name>
        <dbReference type="ChEBI" id="CHEBI:61481"/>
    </ligand>
</feature>
<feature type="binding site" evidence="1">
    <location>
        <position position="182"/>
    </location>
    <ligand>
        <name>dCTP</name>
        <dbReference type="ChEBI" id="CHEBI:61481"/>
    </ligand>
</feature>
<proteinExistence type="inferred from homology"/>
<organism>
    <name type="scientific">Serratia proteamaculans (strain 568)</name>
    <dbReference type="NCBI Taxonomy" id="399741"/>
    <lineage>
        <taxon>Bacteria</taxon>
        <taxon>Pseudomonadati</taxon>
        <taxon>Pseudomonadota</taxon>
        <taxon>Gammaproteobacteria</taxon>
        <taxon>Enterobacterales</taxon>
        <taxon>Yersiniaceae</taxon>
        <taxon>Serratia</taxon>
    </lineage>
</organism>
<evidence type="ECO:0000255" key="1">
    <source>
        <dbReference type="HAMAP-Rule" id="MF_00146"/>
    </source>
</evidence>
<evidence type="ECO:0000256" key="2">
    <source>
        <dbReference type="SAM" id="MobiDB-lite"/>
    </source>
</evidence>
<accession>A8GC41</accession>
<sequence>MRLCDRDIEAWLDCEKLVISPRPPIERINGATVDVRLGNQFRVFRGHTAAFIDLSGPKDEVSAALDRVMSDEIVLPEGEAFFLHPGELALAVTLESVTLPNDLVGWLDGRSSLARLGLMVHVTAHRIDPGWQGRIVLEFYNSGKLPLALRPGMLIGALSFEPLSGPAARPYNSRQDAKYRDQQGAVASRIDKD</sequence>
<dbReference type="EC" id="3.5.4.13" evidence="1"/>
<dbReference type="EMBL" id="CP000826">
    <property type="protein sequence ID" value="ABV40681.1"/>
    <property type="molecule type" value="Genomic_DNA"/>
</dbReference>
<dbReference type="SMR" id="A8GC41"/>
<dbReference type="STRING" id="399741.Spro_1577"/>
<dbReference type="KEGG" id="spe:Spro_1577"/>
<dbReference type="eggNOG" id="COG0717">
    <property type="taxonomic scope" value="Bacteria"/>
</dbReference>
<dbReference type="HOGENOM" id="CLU_087476_2_0_6"/>
<dbReference type="OrthoDB" id="9780956at2"/>
<dbReference type="UniPathway" id="UPA00610">
    <property type="reaction ID" value="UER00665"/>
</dbReference>
<dbReference type="GO" id="GO:0008829">
    <property type="term" value="F:dCTP deaminase activity"/>
    <property type="evidence" value="ECO:0007669"/>
    <property type="project" value="UniProtKB-UniRule"/>
</dbReference>
<dbReference type="GO" id="GO:0000166">
    <property type="term" value="F:nucleotide binding"/>
    <property type="evidence" value="ECO:0007669"/>
    <property type="project" value="UniProtKB-KW"/>
</dbReference>
<dbReference type="GO" id="GO:0006226">
    <property type="term" value="P:dUMP biosynthetic process"/>
    <property type="evidence" value="ECO:0007669"/>
    <property type="project" value="UniProtKB-UniPathway"/>
</dbReference>
<dbReference type="GO" id="GO:0006229">
    <property type="term" value="P:dUTP biosynthetic process"/>
    <property type="evidence" value="ECO:0007669"/>
    <property type="project" value="UniProtKB-UniRule"/>
</dbReference>
<dbReference type="GO" id="GO:0015949">
    <property type="term" value="P:nucleobase-containing small molecule interconversion"/>
    <property type="evidence" value="ECO:0007669"/>
    <property type="project" value="TreeGrafter"/>
</dbReference>
<dbReference type="CDD" id="cd07557">
    <property type="entry name" value="trimeric_dUTPase"/>
    <property type="match status" value="1"/>
</dbReference>
<dbReference type="FunFam" id="2.70.40.10:FF:000003">
    <property type="entry name" value="dCTP deaminase"/>
    <property type="match status" value="1"/>
</dbReference>
<dbReference type="Gene3D" id="2.70.40.10">
    <property type="match status" value="1"/>
</dbReference>
<dbReference type="HAMAP" id="MF_00146">
    <property type="entry name" value="dCTP_deaminase"/>
    <property type="match status" value="1"/>
</dbReference>
<dbReference type="InterPro" id="IPR011962">
    <property type="entry name" value="dCTP_deaminase"/>
</dbReference>
<dbReference type="InterPro" id="IPR036157">
    <property type="entry name" value="dUTPase-like_sf"/>
</dbReference>
<dbReference type="InterPro" id="IPR033704">
    <property type="entry name" value="dUTPase_trimeric"/>
</dbReference>
<dbReference type="NCBIfam" id="TIGR02274">
    <property type="entry name" value="dCTP_deam"/>
    <property type="match status" value="1"/>
</dbReference>
<dbReference type="PANTHER" id="PTHR42680">
    <property type="entry name" value="DCTP DEAMINASE"/>
    <property type="match status" value="1"/>
</dbReference>
<dbReference type="PANTHER" id="PTHR42680:SF3">
    <property type="entry name" value="DCTP DEAMINASE"/>
    <property type="match status" value="1"/>
</dbReference>
<dbReference type="Pfam" id="PF22769">
    <property type="entry name" value="DCD"/>
    <property type="match status" value="1"/>
</dbReference>
<dbReference type="SUPFAM" id="SSF51283">
    <property type="entry name" value="dUTPase-like"/>
    <property type="match status" value="1"/>
</dbReference>
<comment type="function">
    <text evidence="1">Catalyzes the deamination of dCTP to dUTP.</text>
</comment>
<comment type="catalytic activity">
    <reaction evidence="1">
        <text>dCTP + H2O + H(+) = dUTP + NH4(+)</text>
        <dbReference type="Rhea" id="RHEA:22680"/>
        <dbReference type="ChEBI" id="CHEBI:15377"/>
        <dbReference type="ChEBI" id="CHEBI:15378"/>
        <dbReference type="ChEBI" id="CHEBI:28938"/>
        <dbReference type="ChEBI" id="CHEBI:61481"/>
        <dbReference type="ChEBI" id="CHEBI:61555"/>
        <dbReference type="EC" id="3.5.4.13"/>
    </reaction>
</comment>
<comment type="pathway">
    <text evidence="1">Pyrimidine metabolism; dUMP biosynthesis; dUMP from dCTP (dUTP route): step 1/2.</text>
</comment>
<comment type="subunit">
    <text evidence="1">Homotrimer.</text>
</comment>
<comment type="similarity">
    <text evidence="1">Belongs to the dCTP deaminase family.</text>
</comment>
<reference key="1">
    <citation type="submission" date="2007-09" db="EMBL/GenBank/DDBJ databases">
        <title>Complete sequence of chromosome of Serratia proteamaculans 568.</title>
        <authorList>
            <consortium name="US DOE Joint Genome Institute"/>
            <person name="Copeland A."/>
            <person name="Lucas S."/>
            <person name="Lapidus A."/>
            <person name="Barry K."/>
            <person name="Glavina del Rio T."/>
            <person name="Dalin E."/>
            <person name="Tice H."/>
            <person name="Pitluck S."/>
            <person name="Chain P."/>
            <person name="Malfatti S."/>
            <person name="Shin M."/>
            <person name="Vergez L."/>
            <person name="Schmutz J."/>
            <person name="Larimer F."/>
            <person name="Land M."/>
            <person name="Hauser L."/>
            <person name="Kyrpides N."/>
            <person name="Kim E."/>
            <person name="Taghavi S."/>
            <person name="Newman L."/>
            <person name="Vangronsveld J."/>
            <person name="van der Lelie D."/>
            <person name="Richardson P."/>
        </authorList>
    </citation>
    <scope>NUCLEOTIDE SEQUENCE [LARGE SCALE GENOMIC DNA]</scope>
    <source>
        <strain>568</strain>
    </source>
</reference>
<name>DCD_SERP5</name>